<sequence>MGARASVLSGGELDRWEKIRLRPGGKKKYKLKHIVWASRELERFAVNPGLLETSEGCRQILGQLQPSLQTGSEELRSLYNTVATLYCVHQRIEIKDTKEALDKIEEEQNKSKKKAQQAAADTGHSSQVSQNYPIVQNIQGQMVHQAISPRTLNAWVKVVEEKAFSPEVIPMFSALSEGATPQDLNTMLNTVGGHQAAMQMLKETINEEAAEWDRVHPVHAGPIAPGQMREPRGSDIAGTTSTLQEQIGWMTNNPPIPVGEIYKRWIILGLNKIVRMYSPTSILDIRQGPKEPFRDYVDRFYKTLRAEQASQEVKNWMTETLLVQNANPDCKTILKALGPAATLEEMMTACQGVGGPGHKARVLAEAMSQVTNTATIMMQRGNFRNQRKMVKCFNCGKEGHTARNCRAPRKKGCWKCGKEGHQMKDCTERQANFLGKIWPSYKGRPGNFLQSRPEPTAPPFLQSRPEPTAPPEESFRSGVETTTPPQKQEPIDKELYPLTSLRSLFGNDPSSQ</sequence>
<proteinExistence type="evidence at protein level"/>
<feature type="initiator methionine" description="Removed; by host" evidence="1">
    <location>
        <position position="1"/>
    </location>
</feature>
<feature type="chain" id="PRO_0000261209" description="Gag polyprotein">
    <location>
        <begin position="2"/>
        <end position="512"/>
    </location>
</feature>
<feature type="chain" id="PRO_0000038475" description="Matrix protein p17" evidence="1">
    <location>
        <begin position="2"/>
        <end position="132"/>
    </location>
</feature>
<feature type="chain" id="PRO_0000038476" description="Capsid protein p24" evidence="1">
    <location>
        <begin position="133"/>
        <end position="363"/>
    </location>
</feature>
<feature type="peptide" id="PRO_0000038477" description="Spacer peptide 1" evidence="1">
    <location>
        <begin position="364"/>
        <end position="377"/>
    </location>
</feature>
<feature type="chain" id="PRO_0000038478" description="Nucleocapsid protein p7" evidence="1">
    <location>
        <begin position="378"/>
        <end position="432"/>
    </location>
</feature>
<feature type="peptide" id="PRO_0000038479" description="Spacer peptide 2" evidence="1">
    <location>
        <begin position="433"/>
        <end position="448"/>
    </location>
</feature>
<feature type="chain" id="PRO_0000038480" description="p6-gag" evidence="1">
    <location>
        <begin position="449"/>
        <end position="512"/>
    </location>
</feature>
<feature type="zinc finger region" description="CCHC-type 1" evidence="6">
    <location>
        <begin position="390"/>
        <end position="407"/>
    </location>
</feature>
<feature type="zinc finger region" description="CCHC-type 2" evidence="6">
    <location>
        <begin position="411"/>
        <end position="428"/>
    </location>
</feature>
<feature type="region of interest" description="Interaction with Gp41" evidence="4">
    <location>
        <begin position="7"/>
        <end position="31"/>
    </location>
</feature>
<feature type="region of interest" description="Interaction with host CALM1" evidence="3">
    <location>
        <begin position="8"/>
        <end position="43"/>
    </location>
</feature>
<feature type="region of interest" description="Interaction with host AP3D1" evidence="5">
    <location>
        <begin position="12"/>
        <end position="19"/>
    </location>
</feature>
<feature type="region of interest" description="Interaction with membrane phosphatidylinositol 4,5-bisphosphate and RNA" evidence="4">
    <location>
        <begin position="14"/>
        <end position="33"/>
    </location>
</feature>
<feature type="region of interest" description="Interaction with membrane phosphatidylinositol 4,5-bisphosphate" evidence="4">
    <location>
        <begin position="73"/>
        <end position="77"/>
    </location>
</feature>
<feature type="region of interest" description="Disordered" evidence="7">
    <location>
        <begin position="106"/>
        <end position="128"/>
    </location>
</feature>
<feature type="region of interest" description="Interaction with host PPIA/CYPA and NUP153" evidence="4">
    <location>
        <begin position="189"/>
        <end position="227"/>
    </location>
</feature>
<feature type="region of interest" description="PPIA/CYPA-binding loop" evidence="3">
    <location>
        <begin position="217"/>
        <end position="225"/>
    </location>
</feature>
<feature type="region of interest" description="Dimerization/Multimerization of capsid protein p24" evidence="3">
    <location>
        <begin position="277"/>
        <end position="363"/>
    </location>
</feature>
<feature type="region of interest" description="Disordered" evidence="7">
    <location>
        <begin position="444"/>
        <end position="512"/>
    </location>
</feature>
<feature type="short sequence motif" description="Nuclear export signal" evidence="1">
    <location>
        <begin position="16"/>
        <end position="22"/>
    </location>
</feature>
<feature type="short sequence motif" description="Nuclear localization signal" evidence="1">
    <location>
        <begin position="26"/>
        <end position="32"/>
    </location>
</feature>
<feature type="short sequence motif" description="PTAP/PSAP motif 1">
    <location>
        <begin position="455"/>
        <end position="458"/>
    </location>
</feature>
<feature type="short sequence motif" description="PTAP/PSAP motif 2">
    <location>
        <begin position="467"/>
        <end position="470"/>
    </location>
</feature>
<feature type="short sequence motif" description="LYPX(n)L motif">
    <location>
        <begin position="495"/>
        <end position="504"/>
    </location>
</feature>
<feature type="site" description="Cleavage; by viral protease" evidence="1">
    <location>
        <begin position="132"/>
        <end position="133"/>
    </location>
</feature>
<feature type="site" description="Cleavage; by viral protease" evidence="1">
    <location>
        <begin position="363"/>
        <end position="364"/>
    </location>
</feature>
<feature type="site" description="Cleavage; by viral protease" evidence="1">
    <location>
        <begin position="377"/>
        <end position="378"/>
    </location>
</feature>
<feature type="site" description="Cleavage; by viral protease" evidence="1">
    <location>
        <begin position="432"/>
        <end position="433"/>
    </location>
</feature>
<feature type="site" description="Cleavage; by viral protease" evidence="1">
    <location>
        <begin position="448"/>
        <end position="449"/>
    </location>
</feature>
<feature type="modified residue" description="Phosphoserine; by host MAPK1" evidence="4">
    <location>
        <position position="148"/>
    </location>
</feature>
<feature type="modified residue" description="Asymmetric dimethylarginine; in Nucleocapsid protein p7; by host PRMT6" evidence="9">
    <location>
        <position position="387"/>
    </location>
</feature>
<feature type="modified residue" description="Asymmetric dimethylarginine; in Nucleocapsid protein p7; by host PRMT6" evidence="9">
    <location>
        <position position="409"/>
    </location>
</feature>
<feature type="lipid moiety-binding region" description="N-myristoyl glycine; by host" evidence="1">
    <location>
        <position position="2"/>
    </location>
</feature>
<feature type="sequence variant" description="In strain: Isolate PV22.">
    <original>V</original>
    <variation>L</variation>
    <location>
        <position position="297"/>
    </location>
</feature>
<feature type="helix" evidence="11">
    <location>
        <begin position="282"/>
        <end position="284"/>
    </location>
</feature>
<feature type="strand" evidence="12">
    <location>
        <begin position="289"/>
        <end position="291"/>
    </location>
</feature>
<feature type="helix" evidence="11">
    <location>
        <begin position="293"/>
        <end position="306"/>
    </location>
</feature>
<feature type="helix" evidence="11">
    <location>
        <begin position="311"/>
        <end position="324"/>
    </location>
</feature>
<feature type="helix" evidence="11">
    <location>
        <begin position="328"/>
        <end position="337"/>
    </location>
</feature>
<feature type="helix" evidence="11">
    <location>
        <begin position="343"/>
        <end position="350"/>
    </location>
</feature>
<feature type="turn" evidence="11">
    <location>
        <begin position="351"/>
        <end position="354"/>
    </location>
</feature>
<feature type="helix" evidence="12">
    <location>
        <begin position="356"/>
        <end position="369"/>
    </location>
</feature>
<comment type="function">
    <molecule>Gag polyprotein</molecule>
    <text evidence="3">Mediates, with Gag-Pol polyprotein, the essential events in virion assembly, including binding the plasma membrane, making the protein-protein interactions necessary to create spherical particles, recruiting the viral Env proteins, and packaging the genomic RNA via direct interactions with the RNA packaging sequence (Psi).</text>
</comment>
<comment type="function">
    <molecule>Matrix protein p17</molecule>
    <text evidence="1 4">Targets the polyprotein to the plasma membrane via a multipartite membrane-binding signal, that includes its myristoylated N-terminus (By similarity). Matrix protein is part of the pre-integration complex. Implicated in the release from host cell mediated by Vpu. Binds to RNA (By similarity).</text>
</comment>
<comment type="function">
    <molecule>Capsid protein p24</molecule>
    <text evidence="3 4">Forms the conical core that encapsulates the genomic RNA-nucleocapsid complex in the virion. Most core are conical, with only 7% tubular. The core is constituted by capsid protein hexamer subunits. The core is disassembled soon after virion entry (By similarity). The capsid promotes immune invasion by cloaking viral DNA from CGAS detection (By similarity). Host restriction factors such as TRIM5-alpha or TRIMCyp bind retroviral capsids and cause premature capsid disassembly, leading to blocks in reverse transcription. Capsid restriction by TRIM5 is one of the factors which restricts HIV-1 to the human species. Host PIN1 apparently facilitates the virion uncoating (By similarity). On the other hand, interactions with PDZD8 or CYPA stabilize the capsid (By similarity).</text>
</comment>
<comment type="function">
    <molecule>Nucleocapsid protein p7</molecule>
    <text evidence="3">Encapsulates and protects viral dimeric unspliced genomic RNA (gRNA). Binds these RNAs through its zinc fingers. Acts as a nucleic acid chaperone which is involved in rearangement of nucleic acid secondary structure during gRNA retrotranscription. Also facilitates template switch leading to recombination. As part of the polyprotein, participates in gRNA dimerization, packaging, tRNA incorporation and virion assembly.</text>
</comment>
<comment type="function">
    <molecule>p6-gag</molecule>
    <text evidence="4">Plays a role in budding of the assembled particle by interacting with the host class E VPS proteins TSG101 and PDCD6IP/AIP1.</text>
</comment>
<comment type="subunit">
    <molecule>Gag polyprotein</molecule>
    <text evidence="2 3">Homotrimer; further assembles as hexamers of trimers. Oligomerization possibly creates a central hole into which the cytoplasmic tail of the gp41 envelope protein may be inserted. Interacts with host TRIM22; this interaction seems to disrupt proper trafficking of Gag polyprotein and may interfere with budding. Interacts with host PDZD8. When ubiquitinated, interacts (via p6-gag domain) with host PACSIN2; this interaction allows PACSIN2 recruitment to viral assembly sites and its subsequent incorporation into virions. Interacts with MOV10 (By similarity).</text>
</comment>
<comment type="subunit">
    <molecule>Matrix protein p17</molecule>
    <text evidence="3 4">Homotrimer; further assembles as hexamers of trimers. Interacts with gp41 (via C-terminus). Interacts with host CALM1; this interaction induces a conformational change in the Matrix protein, triggering exposure of the myristate group. Interacts with host AP3D1; this interaction allows the polyprotein trafficking to multivesicular bodies during virus assembly. Part of the pre-integration complex (PIC) which is composed of viral genome, matrix protein, Vpr and integrase.</text>
</comment>
<comment type="subunit">
    <molecule>Capsid protein p24</molecule>
    <text evidence="3 4">Homodimer; the homodimer further multimerizes as homohexamers or homopentamers (By similarity). Interacts with host NUP98 (By similarity). Interacts with host PPIA/CYPA; this interaction stabilizes the capsid (By similarity). Interacts with host NUP153 (By similarity). Interacts with host PDZD8; this interaction stabilizes the capsid. Interacts with host TRIM5; this interaction destabilizes the capsid (By similarity). Interacts with host CPSF6 (By similarity). Interacts with host NONO; the interaction is weak (By similarity).</text>
</comment>
<comment type="subunit">
    <molecule>Nucleocapsid protein p7</molecule>
    <text evidence="4">Interacts with host NUP98.</text>
</comment>
<comment type="subunit">
    <molecule>p6-gag</molecule>
    <text evidence="4 8">Interacts with Vpr; this interaction allows Vpr incorporation into the virion (By similarity). Interacts with host TSG101 (By similarity). Interacts with host PDCD6IP/AIP1 (PubMed:14505569).</text>
</comment>
<comment type="interaction">
    <interactant intactId="EBI-1220741">
        <id>P03347</id>
    </interactant>
    <interactant intactId="EBI-1220741">
        <id>P03347</id>
        <label>gag</label>
    </interactant>
    <organismsDiffer>false</organismsDiffer>
    <experiments>2</experiments>
</comment>
<comment type="interaction">
    <interactant intactId="EBI-1220741">
        <id>P03347</id>
    </interactant>
    <interactant intactId="EBI-310624">
        <id>Q8WUM4</id>
        <label>PDCD6IP</label>
    </interactant>
    <organismsDiffer>true</organismsDiffer>
    <experiments>2</experiments>
</comment>
<comment type="interaction">
    <interactant intactId="EBI-10687478">
        <id>P03347-1</id>
    </interactant>
    <interactant intactId="EBI-2510446">
        <id>P61221</id>
        <label>ABCE1</label>
    </interactant>
    <organismsDiffer>true</organismsDiffer>
    <experiments>3</experiments>
</comment>
<comment type="subcellular location">
    <molecule>Gag polyprotein</molecule>
    <subcellularLocation>
        <location evidence="4">Host cell membrane</location>
        <topology evidence="4">Lipid-anchor</topology>
    </subcellularLocation>
    <subcellularLocation>
        <location evidence="4">Host endosome</location>
        <location evidence="4">Host multivesicular body</location>
    </subcellularLocation>
    <text evidence="4">These locations are probably linked to virus assembly sites. The main location is the cell membrane, but under some circumstances, late endosomal compartments can serve as productive sites for virion assembly.</text>
</comment>
<comment type="subcellular location">
    <molecule>Matrix protein p17</molecule>
    <subcellularLocation>
        <location evidence="4">Virion membrane</location>
        <topology evidence="4">Lipid-anchor</topology>
    </subcellularLocation>
    <subcellularLocation>
        <location evidence="1">Host nucleus</location>
    </subcellularLocation>
    <subcellularLocation>
        <location evidence="1">Host cytoplasm</location>
    </subcellularLocation>
</comment>
<comment type="subcellular location">
    <molecule>Capsid protein p24</molecule>
    <subcellularLocation>
        <location evidence="4">Virion</location>
    </subcellularLocation>
</comment>
<comment type="subcellular location">
    <molecule>Nucleocapsid protein p7</molecule>
    <subcellularLocation>
        <location evidence="4">Virion</location>
    </subcellularLocation>
</comment>
<comment type="alternative products">
    <event type="ribosomal frameshifting"/>
    <isoform>
        <id>P03347-1</id>
        <name>Gag polyprotein</name>
        <sequence type="displayed"/>
    </isoform>
    <isoform>
        <id>P03366-1</id>
        <name>Gag-Pol polyprotein</name>
        <sequence type="external"/>
    </isoform>
    <text>Translation results in the formation of the Gag polyprotein most of the time. Ribosomal frameshifting at the gag-pol genes boundary occurs at low frequency and produces the Gag-Pol polyprotein. This strategy of translation probably allows the virus to modulate the quantity of each viral protein. Maintenance of a correct Gag to Gag-Pol ratio is essential for RNA dimerization and viral infectivity.</text>
</comment>
<comment type="domain">
    <text evidence="4">Late-budding domains (L domains) are short sequence motifs essential for viral particle budding. They recruit proteins of the host ESCRT machinery (Endosomal Sorting Complex Required for Transport) or ESCRT-associated proteins. p6-gag contains two L domains: a PTAP/PSAP motif, which interacts with the UEV domain of TSG101 and a LYPX(n)L motif which interacts with PDCD6IP/AIP1.</text>
</comment>
<comment type="PTM">
    <text evidence="4">Gag-Pol polyprotein: Specific enzymatic cleavages by the viral protease yield mature proteins.</text>
</comment>
<comment type="PTM">
    <molecule>Matrix protein p17</molecule>
    <text evidence="3">Tyrosine phosphorylated presumably in the virion by a host kinase. Phosphorylation is apparently not a major regulator of membrane association.</text>
</comment>
<comment type="PTM">
    <molecule>Capsid protein p24</molecule>
    <text evidence="4">Phosphorylated possibly by host MAPK1; this phosphorylation is necessary for Pin1-mediated virion uncoating.</text>
</comment>
<comment type="PTM">
    <molecule>Nucleocapsid protein p7</molecule>
    <text evidence="9">Methylated by host PRMT6, impairing its function by reducing RNA annealing and the initiation of reverse transcription.</text>
</comment>
<comment type="miscellaneous">
    <text>HIV-1 lineages are divided in three main groups, M (for Major), O (for Outlier), and N (for New, or Non-M, Non-O). The vast majority of strains found worldwide belong to the group M. Group O seems to be endemic to and largely confined to Cameroon and neighboring countries in West Central Africa, where these viruses represent a small minority of HIV-1 strains. The group N is represented by a limited number of isolates from Cameroonian persons. The group M is further subdivided in 9 clades or subtypes (A to D, F to H, J and K).</text>
</comment>
<comment type="miscellaneous">
    <molecule>Isoform Gag polyprotein</molecule>
    <text>Produced by conventional translation.</text>
</comment>
<comment type="similarity">
    <text evidence="10">Belongs to the primate lentivirus group gag polyprotein family.</text>
</comment>
<accession>P03347</accession>
<accession>P03350</accession>
<gene>
    <name type="primary">gag</name>
</gene>
<dbReference type="EMBL" id="M15654">
    <property type="protein sequence ID" value="AAA44201.1"/>
    <property type="molecule type" value="Genomic_RNA"/>
</dbReference>
<dbReference type="EMBL" id="K02083">
    <property type="protein sequence ID" value="AAB59866.1"/>
    <property type="molecule type" value="Genomic_DNA"/>
</dbReference>
<dbReference type="EMBL" id="X01762">
    <property type="protein sequence ID" value="CAA25902.1"/>
    <property type="status" value="ALT_SEQ"/>
    <property type="molecule type" value="Genomic_RNA"/>
</dbReference>
<dbReference type="PIR" id="A03945">
    <property type="entry name" value="FOVWH3"/>
</dbReference>
<dbReference type="PIR" id="A03948">
    <property type="entry name" value="FOVWVL"/>
</dbReference>
<dbReference type="PDB" id="2BUO">
    <property type="method" value="X-ray"/>
    <property type="resolution" value="1.70 A"/>
    <property type="chains" value="A=278-363"/>
</dbReference>
<dbReference type="PDB" id="5KP9">
    <property type="method" value="EM"/>
    <property type="resolution" value="5.70 A"/>
    <property type="chains" value="B=461-512"/>
</dbReference>
<dbReference type="PDB" id="6BHR">
    <property type="method" value="X-ray"/>
    <property type="resolution" value="2.91 A"/>
    <property type="chains" value="G=278-372"/>
</dbReference>
<dbReference type="PDBsum" id="2BUO"/>
<dbReference type="PDBsum" id="5KP9"/>
<dbReference type="PDBsum" id="6BHR"/>
<dbReference type="BMRB" id="P03347"/>
<dbReference type="EMDB" id="EMD-8278"/>
<dbReference type="SMR" id="P03347"/>
<dbReference type="ELM" id="P03347"/>
<dbReference type="IntAct" id="P03347">
    <property type="interactions" value="4"/>
</dbReference>
<dbReference type="iPTMnet" id="P03347"/>
<dbReference type="EvolutionaryTrace" id="P03347"/>
<dbReference type="PRO" id="PR:P03347"/>
<dbReference type="Proteomes" id="UP000007690">
    <property type="component" value="Genome"/>
</dbReference>
<dbReference type="Proteomes" id="UP000107234">
    <property type="component" value="Genome"/>
</dbReference>
<dbReference type="Proteomes" id="UP000126245">
    <property type="component" value="Genome"/>
</dbReference>
<dbReference type="GO" id="GO:0042025">
    <property type="term" value="C:host cell nucleus"/>
    <property type="evidence" value="ECO:0007669"/>
    <property type="project" value="UniProtKB-SubCell"/>
</dbReference>
<dbReference type="GO" id="GO:0020002">
    <property type="term" value="C:host cell plasma membrane"/>
    <property type="evidence" value="ECO:0007669"/>
    <property type="project" value="UniProtKB-SubCell"/>
</dbReference>
<dbReference type="GO" id="GO:0072494">
    <property type="term" value="C:host multivesicular body"/>
    <property type="evidence" value="ECO:0007669"/>
    <property type="project" value="UniProtKB-SubCell"/>
</dbReference>
<dbReference type="GO" id="GO:0016020">
    <property type="term" value="C:membrane"/>
    <property type="evidence" value="ECO:0007669"/>
    <property type="project" value="UniProtKB-KW"/>
</dbReference>
<dbReference type="GO" id="GO:0019013">
    <property type="term" value="C:viral nucleocapsid"/>
    <property type="evidence" value="ECO:0007669"/>
    <property type="project" value="UniProtKB-KW"/>
</dbReference>
<dbReference type="GO" id="GO:0055036">
    <property type="term" value="C:virion membrane"/>
    <property type="evidence" value="ECO:0007669"/>
    <property type="project" value="UniProtKB-SubCell"/>
</dbReference>
<dbReference type="GO" id="GO:0042802">
    <property type="term" value="F:identical protein binding"/>
    <property type="evidence" value="ECO:0000353"/>
    <property type="project" value="IntAct"/>
</dbReference>
<dbReference type="GO" id="GO:0003723">
    <property type="term" value="F:RNA binding"/>
    <property type="evidence" value="ECO:0007669"/>
    <property type="project" value="UniProtKB-KW"/>
</dbReference>
<dbReference type="GO" id="GO:0005198">
    <property type="term" value="F:structural molecule activity"/>
    <property type="evidence" value="ECO:0007669"/>
    <property type="project" value="InterPro"/>
</dbReference>
<dbReference type="GO" id="GO:0008270">
    <property type="term" value="F:zinc ion binding"/>
    <property type="evidence" value="ECO:0007669"/>
    <property type="project" value="UniProtKB-KW"/>
</dbReference>
<dbReference type="GO" id="GO:0039702">
    <property type="term" value="P:viral budding via host ESCRT complex"/>
    <property type="evidence" value="ECO:0007669"/>
    <property type="project" value="UniProtKB-KW"/>
</dbReference>
<dbReference type="GO" id="GO:0075523">
    <property type="term" value="P:viral translational frameshifting"/>
    <property type="evidence" value="ECO:0007669"/>
    <property type="project" value="UniProtKB-KW"/>
</dbReference>
<dbReference type="FunFam" id="1.10.1200.30:FF:000001">
    <property type="entry name" value="Gag polyprotein"/>
    <property type="match status" value="1"/>
</dbReference>
<dbReference type="FunFam" id="1.10.150.90:FF:000001">
    <property type="entry name" value="Gag polyprotein"/>
    <property type="match status" value="1"/>
</dbReference>
<dbReference type="FunFam" id="1.10.375.10:FF:000001">
    <property type="entry name" value="Gag polyprotein"/>
    <property type="match status" value="1"/>
</dbReference>
<dbReference type="FunFam" id="1.20.5.760:FF:000001">
    <property type="entry name" value="Gag polyprotein"/>
    <property type="match status" value="1"/>
</dbReference>
<dbReference type="FunFam" id="4.10.60.10:FF:000001">
    <property type="entry name" value="Gag polyprotein"/>
    <property type="match status" value="1"/>
</dbReference>
<dbReference type="Gene3D" id="1.10.1200.30">
    <property type="match status" value="1"/>
</dbReference>
<dbReference type="Gene3D" id="6.10.250.390">
    <property type="match status" value="1"/>
</dbReference>
<dbReference type="Gene3D" id="1.10.375.10">
    <property type="entry name" value="Human Immunodeficiency Virus Type 1 Capsid Protein"/>
    <property type="match status" value="1"/>
</dbReference>
<dbReference type="Gene3D" id="1.10.150.90">
    <property type="entry name" value="Immunodeficiency lentiviruses, gag gene matrix protein p17"/>
    <property type="match status" value="1"/>
</dbReference>
<dbReference type="Gene3D" id="1.20.5.760">
    <property type="entry name" value="Single helix bin"/>
    <property type="match status" value="1"/>
</dbReference>
<dbReference type="Gene3D" id="4.10.60.10">
    <property type="entry name" value="Zinc finger, CCHC-type"/>
    <property type="match status" value="1"/>
</dbReference>
<dbReference type="InterPro" id="IPR045345">
    <property type="entry name" value="Gag_p24_C"/>
</dbReference>
<dbReference type="InterPro" id="IPR014817">
    <property type="entry name" value="Gag_p6"/>
</dbReference>
<dbReference type="InterPro" id="IPR000071">
    <property type="entry name" value="Lentvrl_matrix_N"/>
</dbReference>
<dbReference type="InterPro" id="IPR012344">
    <property type="entry name" value="Matrix_HIV/RSV_N"/>
</dbReference>
<dbReference type="InterPro" id="IPR050195">
    <property type="entry name" value="Primate_lentivir_Gag_pol-like"/>
</dbReference>
<dbReference type="InterPro" id="IPR008916">
    <property type="entry name" value="Retrov_capsid_C"/>
</dbReference>
<dbReference type="InterPro" id="IPR008919">
    <property type="entry name" value="Retrov_capsid_N"/>
</dbReference>
<dbReference type="InterPro" id="IPR010999">
    <property type="entry name" value="Retrovr_matrix"/>
</dbReference>
<dbReference type="InterPro" id="IPR001878">
    <property type="entry name" value="Znf_CCHC"/>
</dbReference>
<dbReference type="InterPro" id="IPR036875">
    <property type="entry name" value="Znf_CCHC_sf"/>
</dbReference>
<dbReference type="PANTHER" id="PTHR40389:SF4">
    <property type="match status" value="1"/>
</dbReference>
<dbReference type="PANTHER" id="PTHR40389">
    <property type="entry name" value="ENDOGENOUS RETROVIRUS GROUP K MEMBER 24 GAG POLYPROTEIN-RELATED"/>
    <property type="match status" value="1"/>
</dbReference>
<dbReference type="Pfam" id="PF00540">
    <property type="entry name" value="Gag_p17"/>
    <property type="match status" value="1"/>
</dbReference>
<dbReference type="Pfam" id="PF00607">
    <property type="entry name" value="Gag_p24"/>
    <property type="match status" value="1"/>
</dbReference>
<dbReference type="Pfam" id="PF19317">
    <property type="entry name" value="Gag_p24_C"/>
    <property type="match status" value="1"/>
</dbReference>
<dbReference type="Pfam" id="PF08705">
    <property type="entry name" value="Gag_p6"/>
    <property type="match status" value="1"/>
</dbReference>
<dbReference type="Pfam" id="PF00098">
    <property type="entry name" value="zf-CCHC"/>
    <property type="match status" value="2"/>
</dbReference>
<dbReference type="PRINTS" id="PR00234">
    <property type="entry name" value="HIV1MATRIX"/>
</dbReference>
<dbReference type="SMART" id="SM00343">
    <property type="entry name" value="ZnF_C2HC"/>
    <property type="match status" value="2"/>
</dbReference>
<dbReference type="SUPFAM" id="SSF47836">
    <property type="entry name" value="Retroviral matrix proteins"/>
    <property type="match status" value="1"/>
</dbReference>
<dbReference type="SUPFAM" id="SSF47353">
    <property type="entry name" value="Retrovirus capsid dimerization domain-like"/>
    <property type="match status" value="1"/>
</dbReference>
<dbReference type="SUPFAM" id="SSF47943">
    <property type="entry name" value="Retrovirus capsid protein, N-terminal core domain"/>
    <property type="match status" value="1"/>
</dbReference>
<dbReference type="SUPFAM" id="SSF57756">
    <property type="entry name" value="Retrovirus zinc finger-like domains"/>
    <property type="match status" value="1"/>
</dbReference>
<dbReference type="PROSITE" id="PS50158">
    <property type="entry name" value="ZF_CCHC"/>
    <property type="match status" value="2"/>
</dbReference>
<evidence type="ECO:0000250" key="1"/>
<evidence type="ECO:0000250" key="2">
    <source>
        <dbReference type="UniProtKB" id="P03349"/>
    </source>
</evidence>
<evidence type="ECO:0000250" key="3">
    <source>
        <dbReference type="UniProtKB" id="P04591"/>
    </source>
</evidence>
<evidence type="ECO:0000250" key="4">
    <source>
        <dbReference type="UniProtKB" id="P12493"/>
    </source>
</evidence>
<evidence type="ECO:0000250" key="5">
    <source>
        <dbReference type="UniProtKB" id="P12497"/>
    </source>
</evidence>
<evidence type="ECO:0000255" key="6">
    <source>
        <dbReference type="PROSITE-ProRule" id="PRU00047"/>
    </source>
</evidence>
<evidence type="ECO:0000256" key="7">
    <source>
        <dbReference type="SAM" id="MobiDB-lite"/>
    </source>
</evidence>
<evidence type="ECO:0000269" key="8">
    <source>
    </source>
</evidence>
<evidence type="ECO:0000269" key="9">
    <source>
    </source>
</evidence>
<evidence type="ECO:0000305" key="10"/>
<evidence type="ECO:0007829" key="11">
    <source>
        <dbReference type="PDB" id="2BUO"/>
    </source>
</evidence>
<evidence type="ECO:0007829" key="12">
    <source>
        <dbReference type="PDB" id="6BHR"/>
    </source>
</evidence>
<name>GAG_HV1B1</name>
<protein>
    <recommendedName>
        <fullName>Gag polyprotein</fullName>
    </recommendedName>
    <alternativeName>
        <fullName>Pr55Gag</fullName>
    </alternativeName>
    <component>
        <recommendedName>
            <fullName>Matrix protein p17</fullName>
            <shortName>MA</shortName>
        </recommendedName>
    </component>
    <component>
        <recommendedName>
            <fullName>Capsid protein p24</fullName>
            <shortName>CA</shortName>
        </recommendedName>
    </component>
    <component>
        <recommendedName>
            <fullName evidence="4">Spacer peptide 1</fullName>
            <shortName>SP1</shortName>
        </recommendedName>
        <alternativeName>
            <fullName>p2</fullName>
        </alternativeName>
    </component>
    <component>
        <recommendedName>
            <fullName>Nucleocapsid protein p7</fullName>
            <shortName>NC</shortName>
        </recommendedName>
    </component>
    <component>
        <recommendedName>
            <fullName evidence="4">Spacer peptide 2</fullName>
            <shortName>SP2</shortName>
        </recommendedName>
        <alternativeName>
            <fullName>p1</fullName>
        </alternativeName>
    </component>
    <component>
        <recommendedName>
            <fullName>p6-gag</fullName>
        </recommendedName>
    </component>
</protein>
<organism>
    <name type="scientific">Human immunodeficiency virus type 1 group M subtype B (isolate BH10)</name>
    <name type="common">HIV-1</name>
    <dbReference type="NCBI Taxonomy" id="11678"/>
    <lineage>
        <taxon>Viruses</taxon>
        <taxon>Riboviria</taxon>
        <taxon>Pararnavirae</taxon>
        <taxon>Artverviricota</taxon>
        <taxon>Revtraviricetes</taxon>
        <taxon>Ortervirales</taxon>
        <taxon>Retroviridae</taxon>
        <taxon>Orthoretrovirinae</taxon>
        <taxon>Lentivirus</taxon>
        <taxon>Human immunodeficiency virus type 1</taxon>
    </lineage>
</organism>
<reference key="1">
    <citation type="journal article" date="1985" name="Nature">
        <title>Complete nucleotide sequence of the AIDS virus, HTLV-III.</title>
        <authorList>
            <person name="Ratner L."/>
            <person name="Haseltine W.A."/>
            <person name="Patarca R."/>
            <person name="Livak K.J."/>
            <person name="Starcich B.R."/>
            <person name="Josephs S.F."/>
            <person name="Doran E.R."/>
            <person name="Rafalski J.A."/>
            <person name="Whitehorn E.A."/>
            <person name="Baumeister K."/>
            <person name="Ivanoff L."/>
            <person name="Petteway S.R. Jr."/>
            <person name="Pearson M.L."/>
            <person name="Lautenberger J.A."/>
            <person name="Papas T.S."/>
            <person name="Ghrayeb J."/>
            <person name="Chang N.T."/>
            <person name="Gallo R.C."/>
            <person name="Wong-Staal F."/>
        </authorList>
    </citation>
    <scope>NUCLEOTIDE SEQUENCE [GENOMIC RNA]</scope>
</reference>
<reference key="2">
    <citation type="journal article" date="1985" name="Nature">
        <title>Nucleic acid structure and expression of the human AIDS/lymphadenopathy retrovirus.</title>
        <authorList>
            <person name="Muesing M.A."/>
            <person name="Smith D.H."/>
            <person name="Cabradilla C.D."/>
            <person name="Benton C.V."/>
            <person name="Lasky L.A."/>
            <person name="Capon D.J."/>
        </authorList>
    </citation>
    <scope>NUCLEOTIDE SEQUENCE [GENOMIC DNA]</scope>
    <source>
        <strain>Isolate PV22</strain>
    </source>
</reference>
<reference key="3">
    <citation type="submission" date="1992-05" db="EMBL/GenBank/DDBJ databases">
        <authorList>
            <person name="Muesing M.A."/>
        </authorList>
    </citation>
    <scope>SEQUENCE REVISION</scope>
</reference>
<reference key="4">
    <citation type="journal article" date="2001" name="J. Virol.">
        <title>Maintenance of the Gag/Gag-Pol ratio is important for human immunodeficiency virus type 1 RNA dimerization and viral infectivity.</title>
        <authorList>
            <person name="Shehu-Xhilaga M."/>
            <person name="Crowe S.M."/>
            <person name="Mak J."/>
        </authorList>
    </citation>
    <scope>GAG/GAG-POL RATIO</scope>
</reference>
<reference key="5">
    <citation type="journal article" date="2003" name="Cell">
        <title>AIP1/ALIX is a binding partner for HIV-1 p6 and EIAV p9 functioning in virus budding.</title>
        <authorList>
            <person name="Strack B."/>
            <person name="Calistri A."/>
            <person name="Craig S."/>
            <person name="Popova E."/>
            <person name="Goettlinger H.G."/>
        </authorList>
    </citation>
    <scope>INTERACTION OF P6-GAG WITH HUMAN PDCD6IP/AIP1</scope>
</reference>
<reference key="6">
    <citation type="journal article" date="2003" name="Biochim. Biophys. Acta">
        <title>Role of HIV-1 Gag domains in viral assembly.</title>
        <authorList>
            <person name="Scarlata S."/>
            <person name="Carter C."/>
        </authorList>
    </citation>
    <scope>REVIEW</scope>
</reference>
<reference key="7">
    <citation type="journal article" date="2007" name="AIDS">
        <title>Arginine methylation of the HIV-1 nucleocapsid protein results in its diminished function.</title>
        <authorList>
            <person name="Invernizzi C.F."/>
            <person name="Xie B."/>
            <person name="Frankel F.A."/>
            <person name="Feldhammer M."/>
            <person name="Roy B.B."/>
            <person name="Richard S."/>
            <person name="Wainberg M.A."/>
        </authorList>
    </citation>
    <scope>METHYLATION AT ARG-387 AND ARG-409 BY HUMAN PRMT6</scope>
    <scope>INTERACTION WITH HUMAN PRMT6</scope>
</reference>
<keyword id="KW-0002">3D-structure</keyword>
<keyword id="KW-0014">AIDS</keyword>
<keyword id="KW-0167">Capsid protein</keyword>
<keyword id="KW-1032">Host cell membrane</keyword>
<keyword id="KW-1035">Host cytoplasm</keyword>
<keyword id="KW-1039">Host endosome</keyword>
<keyword id="KW-1043">Host membrane</keyword>
<keyword id="KW-1048">Host nucleus</keyword>
<keyword id="KW-0945">Host-virus interaction</keyword>
<keyword id="KW-0449">Lipoprotein</keyword>
<keyword id="KW-0472">Membrane</keyword>
<keyword id="KW-0479">Metal-binding</keyword>
<keyword id="KW-0488">Methylation</keyword>
<keyword id="KW-0519">Myristate</keyword>
<keyword id="KW-0597">Phosphoprotein</keyword>
<keyword id="KW-0677">Repeat</keyword>
<keyword id="KW-0688">Ribosomal frameshifting</keyword>
<keyword id="KW-0694">RNA-binding</keyword>
<keyword id="KW-1198">Viral budding</keyword>
<keyword id="KW-1187">Viral budding via the host ESCRT complexes</keyword>
<keyword id="KW-0543">Viral nucleoprotein</keyword>
<keyword id="KW-1188">Viral release from host cell</keyword>
<keyword id="KW-0946">Virion</keyword>
<keyword id="KW-0862">Zinc</keyword>
<keyword id="KW-0863">Zinc-finger</keyword>
<organismHost>
    <name type="scientific">Homo sapiens</name>
    <name type="common">Human</name>
    <dbReference type="NCBI Taxonomy" id="9606"/>
</organismHost>